<feature type="chain" id="PRO_1000080083" description="Large ribosomal subunit protein bL20">
    <location>
        <begin position="1"/>
        <end position="121"/>
    </location>
</feature>
<name>RL20_PETMO</name>
<comment type="function">
    <text evidence="1">Binds directly to 23S ribosomal RNA and is necessary for the in vitro assembly process of the 50S ribosomal subunit. It is not involved in the protein synthesizing functions of that subunit.</text>
</comment>
<comment type="similarity">
    <text evidence="1">Belongs to the bacterial ribosomal protein bL20 family.</text>
</comment>
<sequence length="121" mass="13902">MRIKRSVTSHKKKKKYIKAAKGYSGAVGRRYSLAKQQYYKSGKYSYAGRKNKKRDYRNLWITRINAAARAQGLKYNELIHGLKLANVDINRKMLSELAVNDPDGFNEYVNIAKQSLAESVQ</sequence>
<keyword id="KW-0687">Ribonucleoprotein</keyword>
<keyword id="KW-0689">Ribosomal protein</keyword>
<keyword id="KW-0694">RNA-binding</keyword>
<keyword id="KW-0699">rRNA-binding</keyword>
<accession>A9BFU0</accession>
<protein>
    <recommendedName>
        <fullName evidence="1">Large ribosomal subunit protein bL20</fullName>
    </recommendedName>
    <alternativeName>
        <fullName evidence="2">50S ribosomal protein L20</fullName>
    </alternativeName>
</protein>
<proteinExistence type="inferred from homology"/>
<organism>
    <name type="scientific">Petrotoga mobilis (strain DSM 10674 / SJ95)</name>
    <dbReference type="NCBI Taxonomy" id="403833"/>
    <lineage>
        <taxon>Bacteria</taxon>
        <taxon>Thermotogati</taxon>
        <taxon>Thermotogota</taxon>
        <taxon>Thermotogae</taxon>
        <taxon>Petrotogales</taxon>
        <taxon>Petrotogaceae</taxon>
        <taxon>Petrotoga</taxon>
    </lineage>
</organism>
<dbReference type="EMBL" id="CP000879">
    <property type="protein sequence ID" value="ABX31436.1"/>
    <property type="molecule type" value="Genomic_DNA"/>
</dbReference>
<dbReference type="RefSeq" id="WP_012208539.1">
    <property type="nucleotide sequence ID" value="NC_010003.1"/>
</dbReference>
<dbReference type="SMR" id="A9BFU0"/>
<dbReference type="STRING" id="403833.Pmob_0711"/>
<dbReference type="KEGG" id="pmo:Pmob_0711"/>
<dbReference type="eggNOG" id="COG0292">
    <property type="taxonomic scope" value="Bacteria"/>
</dbReference>
<dbReference type="HOGENOM" id="CLU_123265_0_1_0"/>
<dbReference type="OrthoDB" id="9808966at2"/>
<dbReference type="Proteomes" id="UP000000789">
    <property type="component" value="Chromosome"/>
</dbReference>
<dbReference type="GO" id="GO:1990904">
    <property type="term" value="C:ribonucleoprotein complex"/>
    <property type="evidence" value="ECO:0007669"/>
    <property type="project" value="UniProtKB-KW"/>
</dbReference>
<dbReference type="GO" id="GO:0005840">
    <property type="term" value="C:ribosome"/>
    <property type="evidence" value="ECO:0007669"/>
    <property type="project" value="UniProtKB-KW"/>
</dbReference>
<dbReference type="GO" id="GO:0019843">
    <property type="term" value="F:rRNA binding"/>
    <property type="evidence" value="ECO:0007669"/>
    <property type="project" value="UniProtKB-UniRule"/>
</dbReference>
<dbReference type="GO" id="GO:0003735">
    <property type="term" value="F:structural constituent of ribosome"/>
    <property type="evidence" value="ECO:0007669"/>
    <property type="project" value="InterPro"/>
</dbReference>
<dbReference type="GO" id="GO:0000027">
    <property type="term" value="P:ribosomal large subunit assembly"/>
    <property type="evidence" value="ECO:0007669"/>
    <property type="project" value="UniProtKB-UniRule"/>
</dbReference>
<dbReference type="GO" id="GO:0006412">
    <property type="term" value="P:translation"/>
    <property type="evidence" value="ECO:0007669"/>
    <property type="project" value="InterPro"/>
</dbReference>
<dbReference type="CDD" id="cd07026">
    <property type="entry name" value="Ribosomal_L20"/>
    <property type="match status" value="1"/>
</dbReference>
<dbReference type="FunFam" id="1.10.1900.20:FF:000001">
    <property type="entry name" value="50S ribosomal protein L20"/>
    <property type="match status" value="1"/>
</dbReference>
<dbReference type="Gene3D" id="6.10.160.10">
    <property type="match status" value="1"/>
</dbReference>
<dbReference type="Gene3D" id="1.10.1900.20">
    <property type="entry name" value="Ribosomal protein L20"/>
    <property type="match status" value="1"/>
</dbReference>
<dbReference type="HAMAP" id="MF_00382">
    <property type="entry name" value="Ribosomal_bL20"/>
    <property type="match status" value="1"/>
</dbReference>
<dbReference type="InterPro" id="IPR005813">
    <property type="entry name" value="Ribosomal_bL20"/>
</dbReference>
<dbReference type="InterPro" id="IPR049946">
    <property type="entry name" value="RIBOSOMAL_L20_CS"/>
</dbReference>
<dbReference type="InterPro" id="IPR035566">
    <property type="entry name" value="Ribosomal_protein_bL20_C"/>
</dbReference>
<dbReference type="NCBIfam" id="TIGR01032">
    <property type="entry name" value="rplT_bact"/>
    <property type="match status" value="1"/>
</dbReference>
<dbReference type="PANTHER" id="PTHR10986">
    <property type="entry name" value="39S RIBOSOMAL PROTEIN L20"/>
    <property type="match status" value="1"/>
</dbReference>
<dbReference type="Pfam" id="PF00453">
    <property type="entry name" value="Ribosomal_L20"/>
    <property type="match status" value="1"/>
</dbReference>
<dbReference type="PRINTS" id="PR00062">
    <property type="entry name" value="RIBOSOMALL20"/>
</dbReference>
<dbReference type="SUPFAM" id="SSF74731">
    <property type="entry name" value="Ribosomal protein L20"/>
    <property type="match status" value="1"/>
</dbReference>
<dbReference type="PROSITE" id="PS00937">
    <property type="entry name" value="RIBOSOMAL_L20"/>
    <property type="match status" value="1"/>
</dbReference>
<evidence type="ECO:0000255" key="1">
    <source>
        <dbReference type="HAMAP-Rule" id="MF_00382"/>
    </source>
</evidence>
<evidence type="ECO:0000305" key="2"/>
<gene>
    <name evidence="1" type="primary">rplT</name>
    <name type="ordered locus">Pmob_0711</name>
</gene>
<reference key="1">
    <citation type="submission" date="2007-11" db="EMBL/GenBank/DDBJ databases">
        <title>Complete sequence of Petroga mobilis SJ95.</title>
        <authorList>
            <consortium name="US DOE Joint Genome Institute"/>
            <person name="Copeland A."/>
            <person name="Lucas S."/>
            <person name="Lapidus A."/>
            <person name="Barry K."/>
            <person name="Glavina del Rio T."/>
            <person name="Dalin E."/>
            <person name="Tice H."/>
            <person name="Pitluck S."/>
            <person name="Meincke L."/>
            <person name="Brettin T."/>
            <person name="Bruce D."/>
            <person name="Detter J.C."/>
            <person name="Han C."/>
            <person name="Kuske C.R."/>
            <person name="Schmutz J."/>
            <person name="Larimer F."/>
            <person name="Land M."/>
            <person name="Hauser L."/>
            <person name="Kyrpides N."/>
            <person name="Mikhailova N."/>
            <person name="Noll K."/>
            <person name="Richardson P."/>
        </authorList>
    </citation>
    <scope>NUCLEOTIDE SEQUENCE [LARGE SCALE GENOMIC DNA]</scope>
    <source>
        <strain>DSM 10674 / SJ95</strain>
    </source>
</reference>